<gene>
    <name type="primary">xpsI</name>
    <name type="synonym">pefI</name>
    <name type="ordered locus">XCC0664</name>
</gene>
<organism>
    <name type="scientific">Xanthomonas campestris pv. campestris (strain ATCC 33913 / DSM 3586 / NCPPB 528 / LMG 568 / P 25)</name>
    <dbReference type="NCBI Taxonomy" id="190485"/>
    <lineage>
        <taxon>Bacteria</taxon>
        <taxon>Pseudomonadati</taxon>
        <taxon>Pseudomonadota</taxon>
        <taxon>Gammaproteobacteria</taxon>
        <taxon>Lysobacterales</taxon>
        <taxon>Lysobacteraceae</taxon>
        <taxon>Xanthomonas</taxon>
    </lineage>
</organism>
<keyword id="KW-0997">Cell inner membrane</keyword>
<keyword id="KW-1003">Cell membrane</keyword>
<keyword id="KW-0472">Membrane</keyword>
<keyword id="KW-0488">Methylation</keyword>
<keyword id="KW-0653">Protein transport</keyword>
<keyword id="KW-1185">Reference proteome</keyword>
<keyword id="KW-0812">Transmembrane</keyword>
<keyword id="KW-1133">Transmembrane helix</keyword>
<keyword id="KW-0813">Transport</keyword>
<name>GSPI_XANCP</name>
<proteinExistence type="inferred from homology"/>
<accession>P31738</accession>
<comment type="function">
    <text evidence="1">Component of the type II secretion system required for the energy-dependent secretion of extracellular factors such as proteases and toxins from the periplasm. Part of the pseudopilus tip complex that is critical for the recognition and binding of secretion substrates.</text>
</comment>
<comment type="subunit">
    <text evidence="1">Type II secretion is composed of four main components: the outer membrane complex, the inner membrane complex, the cytoplasmic secretion ATPase and the periplasm-spanning pseudopilus. Interacts with core component XpsG.</text>
</comment>
<comment type="subcellular location">
    <subcellularLocation>
        <location evidence="1">Cell inner membrane</location>
        <topology evidence="2">Single-pass membrane protein</topology>
    </subcellularLocation>
</comment>
<comment type="PTM">
    <text evidence="1">Cleaved by prepilin peptidase.</text>
</comment>
<comment type="PTM">
    <text evidence="1">Methylated by prepilin peptidase at the amino group of the N-terminal tyrosine once the leader sequence is cleaved by prepilin peptidase.</text>
</comment>
<comment type="similarity">
    <text evidence="4">Belongs to the GSP I family.</text>
</comment>
<feature type="propeptide" id="PRO_0000024244" description="Leader sequence" evidence="3">
    <location>
        <begin position="1"/>
        <end position="6"/>
    </location>
</feature>
<feature type="chain" id="PRO_0000024245" description="Type II secretion system protein I">
    <location>
        <begin position="7"/>
        <end position="138"/>
    </location>
</feature>
<feature type="transmembrane region" description="Helical" evidence="2">
    <location>
        <begin position="7"/>
        <end position="29"/>
    </location>
</feature>
<feature type="modified residue" description="N-methyltyrosine" evidence="3">
    <location>
        <position position="7"/>
    </location>
</feature>
<feature type="sequence conflict" description="In Ref. 2; AAC27379." evidence="4" ref="2">
    <original>A</original>
    <variation>V</variation>
    <location>
        <position position="22"/>
    </location>
</feature>
<feature type="sequence conflict" description="In Ref. 2; AAC27379." evidence="4" ref="2">
    <original>D</original>
    <variation>E</variation>
    <location>
        <position position="42"/>
    </location>
</feature>
<feature type="sequence conflict" description="In Ref. 2; AAC27379." evidence="4" ref="2">
    <original>N</original>
    <variation>S</variation>
    <location>
        <position position="118"/>
    </location>
</feature>
<evidence type="ECO:0000250" key="1">
    <source>
        <dbReference type="UniProtKB" id="Q00516"/>
    </source>
</evidence>
<evidence type="ECO:0000255" key="2"/>
<evidence type="ECO:0000255" key="3">
    <source>
        <dbReference type="PROSITE-ProRule" id="PRU01070"/>
    </source>
</evidence>
<evidence type="ECO:0000305" key="4"/>
<reference key="1">
    <citation type="journal article" date="1991" name="Mol. Gen. Genet.">
        <title>Structural characterization of protein secretion genes of the bacterial phytopathogen Xanthomonas campestris pathovar campestris: relatedness to secretion systems of other Gram-negative bacteria.</title>
        <authorList>
            <person name="Dums F."/>
            <person name="Dow J.M."/>
            <person name="Daniels M.J."/>
        </authorList>
    </citation>
    <scope>NUCLEOTIDE SEQUENCE [GENOMIC DNA]</scope>
    <source>
        <strain>8000 NCPPB 1145</strain>
    </source>
</reference>
<reference key="2">
    <citation type="submission" date="2004-11" db="EMBL/GenBank/DDBJ databases">
        <authorList>
            <person name="Hu N.-T.T."/>
            <person name="Hung M.-N."/>
            <person name="Wang K.C."/>
        </authorList>
    </citation>
    <scope>NUCLEOTIDE SEQUENCE [GENOMIC DNA]</scope>
    <source>
        <strain>Xc1701</strain>
    </source>
</reference>
<reference key="3">
    <citation type="journal article" date="2002" name="Nature">
        <title>Comparison of the genomes of two Xanthomonas pathogens with differing host specificities.</title>
        <authorList>
            <person name="da Silva A.C.R."/>
            <person name="Ferro J.A."/>
            <person name="Reinach F.C."/>
            <person name="Farah C.S."/>
            <person name="Furlan L.R."/>
            <person name="Quaggio R.B."/>
            <person name="Monteiro-Vitorello C.B."/>
            <person name="Van Sluys M.A."/>
            <person name="Almeida N.F. Jr."/>
            <person name="Alves L.M.C."/>
            <person name="do Amaral A.M."/>
            <person name="Bertolini M.C."/>
            <person name="Camargo L.E.A."/>
            <person name="Camarotte G."/>
            <person name="Cannavan F."/>
            <person name="Cardozo J."/>
            <person name="Chambergo F."/>
            <person name="Ciapina L.P."/>
            <person name="Cicarelli R.M.B."/>
            <person name="Coutinho L.L."/>
            <person name="Cursino-Santos J.R."/>
            <person name="El-Dorry H."/>
            <person name="Faria J.B."/>
            <person name="Ferreira A.J.S."/>
            <person name="Ferreira R.C.C."/>
            <person name="Ferro M.I.T."/>
            <person name="Formighieri E.F."/>
            <person name="Franco M.C."/>
            <person name="Greggio C.C."/>
            <person name="Gruber A."/>
            <person name="Katsuyama A.M."/>
            <person name="Kishi L.T."/>
            <person name="Leite R.P."/>
            <person name="Lemos E.G.M."/>
            <person name="Lemos M.V.F."/>
            <person name="Locali E.C."/>
            <person name="Machado M.A."/>
            <person name="Madeira A.M.B.N."/>
            <person name="Martinez-Rossi N.M."/>
            <person name="Martins E.C."/>
            <person name="Meidanis J."/>
            <person name="Menck C.F.M."/>
            <person name="Miyaki C.Y."/>
            <person name="Moon D.H."/>
            <person name="Moreira L.M."/>
            <person name="Novo M.T.M."/>
            <person name="Okura V.K."/>
            <person name="Oliveira M.C."/>
            <person name="Oliveira V.R."/>
            <person name="Pereira H.A."/>
            <person name="Rossi A."/>
            <person name="Sena J.A.D."/>
            <person name="Silva C."/>
            <person name="de Souza R.F."/>
            <person name="Spinola L.A.F."/>
            <person name="Takita M.A."/>
            <person name="Tamura R.E."/>
            <person name="Teixeira E.C."/>
            <person name="Tezza R.I.D."/>
            <person name="Trindade dos Santos M."/>
            <person name="Truffi D."/>
            <person name="Tsai S.M."/>
            <person name="White F.F."/>
            <person name="Setubal J.C."/>
            <person name="Kitajima J.P."/>
        </authorList>
    </citation>
    <scope>NUCLEOTIDE SEQUENCE [LARGE SCALE GENOMIC DNA]</scope>
    <source>
        <strain>ATCC 33913 / DSM 3586 / NCPPB 528 / LMG 568 / P 25</strain>
    </source>
</reference>
<protein>
    <recommendedName>
        <fullName>Type II secretion system protein I</fullName>
        <shortName>T2SS minor pseudopilin I</shortName>
    </recommendedName>
    <alternativeName>
        <fullName>General secretion pathway protein I</fullName>
    </alternativeName>
</protein>
<sequence length="138" mass="15125">MKHQRGYSLIEVIVAFALLALALTLLLGSLSGAARQVRGADDSTRATLHAQSLLAVQGMEQPLVPGQQQGSLEDGHFRWSLDVRPYDEPRRNAQAPVDPSAPTLLQLTLVVRWGEQPNQRLLWRTLRLVTATAQGNPA</sequence>
<dbReference type="EMBL" id="X59079">
    <property type="protein sequence ID" value="CAA41807.1"/>
    <property type="molecule type" value="Genomic_DNA"/>
</dbReference>
<dbReference type="EMBL" id="L02630">
    <property type="protein sequence ID" value="AAC27379.2"/>
    <property type="molecule type" value="Genomic_DNA"/>
</dbReference>
<dbReference type="EMBL" id="AE008922">
    <property type="protein sequence ID" value="AAM39980.1"/>
    <property type="molecule type" value="Genomic_DNA"/>
</dbReference>
<dbReference type="PIR" id="S17941">
    <property type="entry name" value="S17941"/>
</dbReference>
<dbReference type="RefSeq" id="NP_636056.1">
    <property type="nucleotide sequence ID" value="NC_003902.1"/>
</dbReference>
<dbReference type="RefSeq" id="WP_011035904.1">
    <property type="nucleotide sequence ID" value="NC_003902.1"/>
</dbReference>
<dbReference type="SMR" id="P31738"/>
<dbReference type="STRING" id="190485.XCC0664"/>
<dbReference type="EnsemblBacteria" id="AAM39980">
    <property type="protein sequence ID" value="AAM39980"/>
    <property type="gene ID" value="XCC0664"/>
</dbReference>
<dbReference type="KEGG" id="xcc:XCC0664"/>
<dbReference type="PATRIC" id="fig|190485.4.peg.729"/>
<dbReference type="eggNOG" id="COG2165">
    <property type="taxonomic scope" value="Bacteria"/>
</dbReference>
<dbReference type="HOGENOM" id="CLU_130289_0_0_6"/>
<dbReference type="OrthoDB" id="7864109at2"/>
<dbReference type="Proteomes" id="UP000001010">
    <property type="component" value="Chromosome"/>
</dbReference>
<dbReference type="GO" id="GO:0005886">
    <property type="term" value="C:plasma membrane"/>
    <property type="evidence" value="ECO:0007669"/>
    <property type="project" value="UniProtKB-SubCell"/>
</dbReference>
<dbReference type="GO" id="GO:0015627">
    <property type="term" value="C:type II protein secretion system complex"/>
    <property type="evidence" value="ECO:0000318"/>
    <property type="project" value="GO_Central"/>
</dbReference>
<dbReference type="GO" id="GO:0015628">
    <property type="term" value="P:protein secretion by the type II secretion system"/>
    <property type="evidence" value="ECO:0000318"/>
    <property type="project" value="GO_Central"/>
</dbReference>
<dbReference type="InterPro" id="IPR012902">
    <property type="entry name" value="N_methyl_site"/>
</dbReference>
<dbReference type="InterPro" id="IPR010052">
    <property type="entry name" value="T2SS_protein-GspI"/>
</dbReference>
<dbReference type="NCBIfam" id="TIGR02532">
    <property type="entry name" value="IV_pilin_GFxxxE"/>
    <property type="match status" value="1"/>
</dbReference>
<dbReference type="NCBIfam" id="NF047828">
    <property type="entry name" value="T3SSXpsI"/>
    <property type="match status" value="1"/>
</dbReference>
<dbReference type="PANTHER" id="PTHR38779">
    <property type="entry name" value="TYPE II SECRETION SYSTEM PROTEIN I-RELATED"/>
    <property type="match status" value="1"/>
</dbReference>
<dbReference type="PANTHER" id="PTHR38779:SF2">
    <property type="entry name" value="TYPE II SECRETION SYSTEM PROTEIN I-RELATED"/>
    <property type="match status" value="1"/>
</dbReference>
<dbReference type="Pfam" id="PF07963">
    <property type="entry name" value="N_methyl"/>
    <property type="match status" value="1"/>
</dbReference>
<dbReference type="PROSITE" id="PS00409">
    <property type="entry name" value="PROKAR_NTER_METHYL"/>
    <property type="match status" value="1"/>
</dbReference>